<accession>Q9BPC3</accession>
<reference key="1">
    <citation type="journal article" date="2001" name="Mol. Biol. Evol.">
        <title>Mechanisms for evolving hypervariability: the case of conopeptides.</title>
        <authorList>
            <person name="Conticello S.G."/>
            <person name="Gilad Y."/>
            <person name="Avidan N."/>
            <person name="Ben-Asher E."/>
            <person name="Levy Z."/>
            <person name="Fainzilber M."/>
        </authorList>
    </citation>
    <scope>NUCLEOTIDE SEQUENCE [MRNA]</scope>
    <source>
        <tissue>Venom duct</tissue>
    </source>
</reference>
<keyword id="KW-0165">Cleavage on pair of basic residues</keyword>
<keyword id="KW-1015">Disulfide bond</keyword>
<keyword id="KW-0960">Knottin</keyword>
<keyword id="KW-0528">Neurotoxin</keyword>
<keyword id="KW-0964">Secreted</keyword>
<keyword id="KW-0732">Signal</keyword>
<keyword id="KW-0800">Toxin</keyword>
<name>O267_CONVE</name>
<dbReference type="EMBL" id="AF215011">
    <property type="protein sequence ID" value="AAG60439.1"/>
    <property type="molecule type" value="mRNA"/>
</dbReference>
<dbReference type="SMR" id="Q9BPC3"/>
<dbReference type="ConoServer" id="698">
    <property type="toxin name" value="Vn6.7 precursor"/>
</dbReference>
<dbReference type="GO" id="GO:0005576">
    <property type="term" value="C:extracellular region"/>
    <property type="evidence" value="ECO:0007669"/>
    <property type="project" value="UniProtKB-SubCell"/>
</dbReference>
<dbReference type="GO" id="GO:0008200">
    <property type="term" value="F:ion channel inhibitor activity"/>
    <property type="evidence" value="ECO:0007669"/>
    <property type="project" value="InterPro"/>
</dbReference>
<dbReference type="GO" id="GO:0090729">
    <property type="term" value="F:toxin activity"/>
    <property type="evidence" value="ECO:0007669"/>
    <property type="project" value="UniProtKB-KW"/>
</dbReference>
<dbReference type="InterPro" id="IPR004214">
    <property type="entry name" value="Conotoxin"/>
</dbReference>
<dbReference type="Pfam" id="PF02950">
    <property type="entry name" value="Conotoxin"/>
    <property type="match status" value="1"/>
</dbReference>
<comment type="subcellular location">
    <subcellularLocation>
        <location evidence="1">Secreted</location>
    </subcellularLocation>
</comment>
<comment type="tissue specificity">
    <text>Expressed by the venom duct.</text>
</comment>
<comment type="domain">
    <text evidence="1">The presence of a 'disulfide through disulfide knot' structurally defines this protein as a knottin.</text>
</comment>
<comment type="domain">
    <text>The cysteine framework is VI/VII (C-C-CC-C-C).</text>
</comment>
<comment type="similarity">
    <text evidence="3">Belongs to the conotoxin O2 superfamily.</text>
</comment>
<organism>
    <name type="scientific">Conus ventricosus</name>
    <name type="common">Mediterranean cone</name>
    <dbReference type="NCBI Taxonomy" id="117992"/>
    <lineage>
        <taxon>Eukaryota</taxon>
        <taxon>Metazoa</taxon>
        <taxon>Spiralia</taxon>
        <taxon>Lophotrochozoa</taxon>
        <taxon>Mollusca</taxon>
        <taxon>Gastropoda</taxon>
        <taxon>Caenogastropoda</taxon>
        <taxon>Neogastropoda</taxon>
        <taxon>Conoidea</taxon>
        <taxon>Conidae</taxon>
        <taxon>Conus</taxon>
        <taxon>Lautoconus</taxon>
    </lineage>
</organism>
<proteinExistence type="evidence at transcript level"/>
<feature type="signal peptide" evidence="2">
    <location>
        <begin position="1"/>
        <end position="18"/>
    </location>
</feature>
<feature type="propeptide" id="PRO_0000404824" evidence="1">
    <location>
        <begin position="19"/>
        <end position="42"/>
    </location>
</feature>
<feature type="peptide" id="PRO_0000404825" description="Conotoxin VnMEKL-012">
    <location>
        <begin position="46"/>
        <end position="76"/>
    </location>
</feature>
<feature type="disulfide bond" evidence="1">
    <location>
        <begin position="49"/>
        <end position="65"/>
    </location>
</feature>
<feature type="disulfide bond" evidence="1">
    <location>
        <begin position="56"/>
        <end position="70"/>
    </location>
</feature>
<feature type="disulfide bond" evidence="1">
    <location>
        <begin position="64"/>
        <end position="74"/>
    </location>
</feature>
<protein>
    <recommendedName>
        <fullName>Conotoxin VnMEKL-012</fullName>
    </recommendedName>
</protein>
<sequence>MKLTILFLVAAVLMSTQALIQHDGEKSQKAKMKFLTARTLSAKKRDVDCVGWSSYCGPWNNPPCCSWYTCDYYCKL</sequence>
<evidence type="ECO:0000250" key="1"/>
<evidence type="ECO:0000255" key="2"/>
<evidence type="ECO:0000305" key="3"/>